<name>NDK_MYCSS</name>
<proteinExistence type="inferred from homology"/>
<dbReference type="EC" id="2.7.4.6" evidence="1"/>
<dbReference type="EMBL" id="CP000384">
    <property type="protein sequence ID" value="ABG09659.1"/>
    <property type="status" value="ALT_INIT"/>
    <property type="molecule type" value="Genomic_DNA"/>
</dbReference>
<dbReference type="SMR" id="Q1B625"/>
<dbReference type="KEGG" id="mmc:Mmcs_3552"/>
<dbReference type="HOGENOM" id="CLU_060216_6_3_11"/>
<dbReference type="BioCyc" id="MSP164756:G1G6O-3623-MONOMER"/>
<dbReference type="GO" id="GO:0005737">
    <property type="term" value="C:cytoplasm"/>
    <property type="evidence" value="ECO:0007669"/>
    <property type="project" value="UniProtKB-SubCell"/>
</dbReference>
<dbReference type="GO" id="GO:0005524">
    <property type="term" value="F:ATP binding"/>
    <property type="evidence" value="ECO:0007669"/>
    <property type="project" value="UniProtKB-UniRule"/>
</dbReference>
<dbReference type="GO" id="GO:0046872">
    <property type="term" value="F:metal ion binding"/>
    <property type="evidence" value="ECO:0007669"/>
    <property type="project" value="UniProtKB-KW"/>
</dbReference>
<dbReference type="GO" id="GO:0004550">
    <property type="term" value="F:nucleoside diphosphate kinase activity"/>
    <property type="evidence" value="ECO:0007669"/>
    <property type="project" value="UniProtKB-UniRule"/>
</dbReference>
<dbReference type="GO" id="GO:0006241">
    <property type="term" value="P:CTP biosynthetic process"/>
    <property type="evidence" value="ECO:0007669"/>
    <property type="project" value="UniProtKB-UniRule"/>
</dbReference>
<dbReference type="GO" id="GO:0006183">
    <property type="term" value="P:GTP biosynthetic process"/>
    <property type="evidence" value="ECO:0007669"/>
    <property type="project" value="UniProtKB-UniRule"/>
</dbReference>
<dbReference type="GO" id="GO:0006228">
    <property type="term" value="P:UTP biosynthetic process"/>
    <property type="evidence" value="ECO:0007669"/>
    <property type="project" value="UniProtKB-UniRule"/>
</dbReference>
<dbReference type="CDD" id="cd04413">
    <property type="entry name" value="NDPk_I"/>
    <property type="match status" value="1"/>
</dbReference>
<dbReference type="FunFam" id="3.30.70.141:FF:000003">
    <property type="entry name" value="Nucleoside diphosphate kinase"/>
    <property type="match status" value="1"/>
</dbReference>
<dbReference type="Gene3D" id="3.30.70.141">
    <property type="entry name" value="Nucleoside diphosphate kinase-like domain"/>
    <property type="match status" value="1"/>
</dbReference>
<dbReference type="HAMAP" id="MF_00451">
    <property type="entry name" value="NDP_kinase"/>
    <property type="match status" value="1"/>
</dbReference>
<dbReference type="InterPro" id="IPR034907">
    <property type="entry name" value="NDK-like_dom"/>
</dbReference>
<dbReference type="InterPro" id="IPR036850">
    <property type="entry name" value="NDK-like_dom_sf"/>
</dbReference>
<dbReference type="InterPro" id="IPR001564">
    <property type="entry name" value="Nucleoside_diP_kinase"/>
</dbReference>
<dbReference type="InterPro" id="IPR023005">
    <property type="entry name" value="Nucleoside_diP_kinase_AS"/>
</dbReference>
<dbReference type="NCBIfam" id="NF001908">
    <property type="entry name" value="PRK00668.1"/>
    <property type="match status" value="1"/>
</dbReference>
<dbReference type="PANTHER" id="PTHR11349">
    <property type="entry name" value="NUCLEOSIDE DIPHOSPHATE KINASE"/>
    <property type="match status" value="1"/>
</dbReference>
<dbReference type="Pfam" id="PF00334">
    <property type="entry name" value="NDK"/>
    <property type="match status" value="1"/>
</dbReference>
<dbReference type="PRINTS" id="PR01243">
    <property type="entry name" value="NUCDPKINASE"/>
</dbReference>
<dbReference type="SMART" id="SM00562">
    <property type="entry name" value="NDK"/>
    <property type="match status" value="1"/>
</dbReference>
<dbReference type="SUPFAM" id="SSF54919">
    <property type="entry name" value="Nucleoside diphosphate kinase, NDK"/>
    <property type="match status" value="1"/>
</dbReference>
<dbReference type="PROSITE" id="PS00469">
    <property type="entry name" value="NDPK"/>
    <property type="match status" value="1"/>
</dbReference>
<dbReference type="PROSITE" id="PS51374">
    <property type="entry name" value="NDPK_LIKE"/>
    <property type="match status" value="1"/>
</dbReference>
<protein>
    <recommendedName>
        <fullName evidence="1">Nucleoside diphosphate kinase</fullName>
        <shortName evidence="1">NDK</shortName>
        <shortName evidence="1">NDP kinase</shortName>
        <ecNumber evidence="1">2.7.4.6</ecNumber>
    </recommendedName>
    <alternativeName>
        <fullName evidence="1">Nucleoside-2-P kinase</fullName>
    </alternativeName>
</protein>
<organism>
    <name type="scientific">Mycobacterium sp. (strain MCS)</name>
    <dbReference type="NCBI Taxonomy" id="164756"/>
    <lineage>
        <taxon>Bacteria</taxon>
        <taxon>Bacillati</taxon>
        <taxon>Actinomycetota</taxon>
        <taxon>Actinomycetes</taxon>
        <taxon>Mycobacteriales</taxon>
        <taxon>Mycobacteriaceae</taxon>
        <taxon>Mycobacterium</taxon>
    </lineage>
</organism>
<keyword id="KW-0067">ATP-binding</keyword>
<keyword id="KW-0963">Cytoplasm</keyword>
<keyword id="KW-0418">Kinase</keyword>
<keyword id="KW-0460">Magnesium</keyword>
<keyword id="KW-0479">Metal-binding</keyword>
<keyword id="KW-0546">Nucleotide metabolism</keyword>
<keyword id="KW-0547">Nucleotide-binding</keyword>
<keyword id="KW-0597">Phosphoprotein</keyword>
<keyword id="KW-0808">Transferase</keyword>
<feature type="chain" id="PRO_0000267789" description="Nucleoside diphosphate kinase">
    <location>
        <begin position="1"/>
        <end position="136"/>
    </location>
</feature>
<feature type="active site" description="Pros-phosphohistidine intermediate" evidence="1">
    <location>
        <position position="117"/>
    </location>
</feature>
<feature type="binding site" evidence="1">
    <location>
        <position position="10"/>
    </location>
    <ligand>
        <name>ATP</name>
        <dbReference type="ChEBI" id="CHEBI:30616"/>
    </ligand>
</feature>
<feature type="binding site" evidence="1">
    <location>
        <position position="58"/>
    </location>
    <ligand>
        <name>ATP</name>
        <dbReference type="ChEBI" id="CHEBI:30616"/>
    </ligand>
</feature>
<feature type="binding site" evidence="1">
    <location>
        <position position="86"/>
    </location>
    <ligand>
        <name>ATP</name>
        <dbReference type="ChEBI" id="CHEBI:30616"/>
    </ligand>
</feature>
<feature type="binding site" evidence="1">
    <location>
        <position position="92"/>
    </location>
    <ligand>
        <name>ATP</name>
        <dbReference type="ChEBI" id="CHEBI:30616"/>
    </ligand>
</feature>
<feature type="binding site" evidence="1">
    <location>
        <position position="104"/>
    </location>
    <ligand>
        <name>ATP</name>
        <dbReference type="ChEBI" id="CHEBI:30616"/>
    </ligand>
</feature>
<feature type="binding site" evidence="1">
    <location>
        <position position="114"/>
    </location>
    <ligand>
        <name>ATP</name>
        <dbReference type="ChEBI" id="CHEBI:30616"/>
    </ligand>
</feature>
<sequence>MTERTLVLIKPDGVQRRLVGEILGRIERKGLTLAALELKTVDDELARRHYAEHEGKPFFGSLLEFITSGPVVAAIVEGPRAIAAFRQIAGGTDPVEKATPGTIRADLALVTQDNLVHGSDSPESAAREIDLWFPGR</sequence>
<evidence type="ECO:0000255" key="1">
    <source>
        <dbReference type="HAMAP-Rule" id="MF_00451"/>
    </source>
</evidence>
<evidence type="ECO:0000305" key="2"/>
<accession>Q1B625</accession>
<gene>
    <name evidence="1" type="primary">ndk</name>
    <name type="ordered locus">Mmcs_3552</name>
</gene>
<reference key="1">
    <citation type="submission" date="2006-06" db="EMBL/GenBank/DDBJ databases">
        <title>Complete sequence of chromosome of Mycobacterium sp. MCS.</title>
        <authorList>
            <consortium name="US DOE Joint Genome Institute"/>
            <person name="Copeland A."/>
            <person name="Lucas S."/>
            <person name="Lapidus A."/>
            <person name="Barry K."/>
            <person name="Detter J.C."/>
            <person name="Glavina del Rio T."/>
            <person name="Hammon N."/>
            <person name="Israni S."/>
            <person name="Dalin E."/>
            <person name="Tice H."/>
            <person name="Pitluck S."/>
            <person name="Martinez M."/>
            <person name="Schmutz J."/>
            <person name="Larimer F."/>
            <person name="Land M."/>
            <person name="Hauser L."/>
            <person name="Kyrpides N."/>
            <person name="Kim E."/>
            <person name="Miller C.D."/>
            <person name="Hughes J.E."/>
            <person name="Anderson A.J."/>
            <person name="Sims R.C."/>
            <person name="Richardson P."/>
        </authorList>
    </citation>
    <scope>NUCLEOTIDE SEQUENCE [LARGE SCALE GENOMIC DNA]</scope>
    <source>
        <strain>MCS</strain>
    </source>
</reference>
<comment type="function">
    <text evidence="1">Major role in the synthesis of nucleoside triphosphates other than ATP. The ATP gamma phosphate is transferred to the NDP beta phosphate via a ping-pong mechanism, using a phosphorylated active-site intermediate.</text>
</comment>
<comment type="catalytic activity">
    <reaction evidence="1">
        <text>a 2'-deoxyribonucleoside 5'-diphosphate + ATP = a 2'-deoxyribonucleoside 5'-triphosphate + ADP</text>
        <dbReference type="Rhea" id="RHEA:44640"/>
        <dbReference type="ChEBI" id="CHEBI:30616"/>
        <dbReference type="ChEBI" id="CHEBI:61560"/>
        <dbReference type="ChEBI" id="CHEBI:73316"/>
        <dbReference type="ChEBI" id="CHEBI:456216"/>
        <dbReference type="EC" id="2.7.4.6"/>
    </reaction>
</comment>
<comment type="catalytic activity">
    <reaction evidence="1">
        <text>a ribonucleoside 5'-diphosphate + ATP = a ribonucleoside 5'-triphosphate + ADP</text>
        <dbReference type="Rhea" id="RHEA:18113"/>
        <dbReference type="ChEBI" id="CHEBI:30616"/>
        <dbReference type="ChEBI" id="CHEBI:57930"/>
        <dbReference type="ChEBI" id="CHEBI:61557"/>
        <dbReference type="ChEBI" id="CHEBI:456216"/>
        <dbReference type="EC" id="2.7.4.6"/>
    </reaction>
</comment>
<comment type="cofactor">
    <cofactor evidence="1">
        <name>Mg(2+)</name>
        <dbReference type="ChEBI" id="CHEBI:18420"/>
    </cofactor>
</comment>
<comment type="subunit">
    <text evidence="1">Homotetramer.</text>
</comment>
<comment type="subcellular location">
    <subcellularLocation>
        <location evidence="1">Cytoplasm</location>
    </subcellularLocation>
</comment>
<comment type="similarity">
    <text evidence="1">Belongs to the NDK family.</text>
</comment>
<comment type="sequence caution" evidence="2">
    <conflict type="erroneous initiation">
        <sequence resource="EMBL-CDS" id="ABG09659"/>
    </conflict>
</comment>